<comment type="function">
    <text evidence="1">Catalyzes the tRNA-independent activation of glutamate in presence of ATP and the subsequent transfer of glutamate onto a tRNA(Asp). Glutamate is transferred on the 2-amino-5-(4,5-dihydroxy-2-cyclopenten-1-yl) moiety of the queuosine in the wobble position of the QUC anticodon.</text>
</comment>
<comment type="cofactor">
    <cofactor evidence="1">
        <name>Zn(2+)</name>
        <dbReference type="ChEBI" id="CHEBI:29105"/>
    </cofactor>
    <text evidence="1">Binds 1 zinc ion per subunit.</text>
</comment>
<comment type="similarity">
    <text evidence="1">Belongs to the class-I aminoacyl-tRNA synthetase family. GluQ subfamily.</text>
</comment>
<organism>
    <name type="scientific">Prochlorococcus marinus (strain MIT 9313)</name>
    <dbReference type="NCBI Taxonomy" id="74547"/>
    <lineage>
        <taxon>Bacteria</taxon>
        <taxon>Bacillati</taxon>
        <taxon>Cyanobacteriota</taxon>
        <taxon>Cyanophyceae</taxon>
        <taxon>Synechococcales</taxon>
        <taxon>Prochlorococcaceae</taxon>
        <taxon>Prochlorococcus</taxon>
    </lineage>
</organism>
<gene>
    <name evidence="1" type="primary">gluQ</name>
    <name type="ordered locus">PMT_1394</name>
</gene>
<dbReference type="EC" id="6.1.1.-" evidence="1"/>
<dbReference type="EMBL" id="BX548175">
    <property type="protein sequence ID" value="CAE21569.1"/>
    <property type="molecule type" value="Genomic_DNA"/>
</dbReference>
<dbReference type="RefSeq" id="WP_011130762.1">
    <property type="nucleotide sequence ID" value="NC_005071.1"/>
</dbReference>
<dbReference type="SMR" id="Q7TUT1"/>
<dbReference type="KEGG" id="pmt:PMT_1394"/>
<dbReference type="eggNOG" id="COG0008">
    <property type="taxonomic scope" value="Bacteria"/>
</dbReference>
<dbReference type="HOGENOM" id="CLU_015768_0_0_3"/>
<dbReference type="OrthoDB" id="9807503at2"/>
<dbReference type="Proteomes" id="UP000001423">
    <property type="component" value="Chromosome"/>
</dbReference>
<dbReference type="GO" id="GO:0005829">
    <property type="term" value="C:cytosol"/>
    <property type="evidence" value="ECO:0007669"/>
    <property type="project" value="TreeGrafter"/>
</dbReference>
<dbReference type="GO" id="GO:0005524">
    <property type="term" value="F:ATP binding"/>
    <property type="evidence" value="ECO:0007669"/>
    <property type="project" value="UniProtKB-KW"/>
</dbReference>
<dbReference type="GO" id="GO:0004818">
    <property type="term" value="F:glutamate-tRNA ligase activity"/>
    <property type="evidence" value="ECO:0007669"/>
    <property type="project" value="TreeGrafter"/>
</dbReference>
<dbReference type="GO" id="GO:0008270">
    <property type="term" value="F:zinc ion binding"/>
    <property type="evidence" value="ECO:0007669"/>
    <property type="project" value="UniProtKB-UniRule"/>
</dbReference>
<dbReference type="GO" id="GO:0006424">
    <property type="term" value="P:glutamyl-tRNA aminoacylation"/>
    <property type="evidence" value="ECO:0007669"/>
    <property type="project" value="InterPro"/>
</dbReference>
<dbReference type="GO" id="GO:0006400">
    <property type="term" value="P:tRNA modification"/>
    <property type="evidence" value="ECO:0007669"/>
    <property type="project" value="InterPro"/>
</dbReference>
<dbReference type="Gene3D" id="3.40.50.620">
    <property type="entry name" value="HUPs"/>
    <property type="match status" value="1"/>
</dbReference>
<dbReference type="HAMAP" id="MF_01428">
    <property type="entry name" value="Glu_Q_tRNA_synth"/>
    <property type="match status" value="1"/>
</dbReference>
<dbReference type="InterPro" id="IPR001412">
    <property type="entry name" value="aa-tRNA-synth_I_CS"/>
</dbReference>
<dbReference type="InterPro" id="IPR022380">
    <property type="entry name" value="Glu-Q_tRNA(Asp)_Synthase"/>
</dbReference>
<dbReference type="InterPro" id="IPR000924">
    <property type="entry name" value="Glu/Gln-tRNA-synth"/>
</dbReference>
<dbReference type="InterPro" id="IPR020058">
    <property type="entry name" value="Glu/Gln-tRNA-synth_Ib_cat-dom"/>
</dbReference>
<dbReference type="InterPro" id="IPR049940">
    <property type="entry name" value="GluQ/Sye"/>
</dbReference>
<dbReference type="InterPro" id="IPR014729">
    <property type="entry name" value="Rossmann-like_a/b/a_fold"/>
</dbReference>
<dbReference type="NCBIfam" id="NF004314">
    <property type="entry name" value="PRK05710.1-3"/>
    <property type="match status" value="1"/>
</dbReference>
<dbReference type="PANTHER" id="PTHR43311">
    <property type="entry name" value="GLUTAMATE--TRNA LIGASE"/>
    <property type="match status" value="1"/>
</dbReference>
<dbReference type="PANTHER" id="PTHR43311:SF1">
    <property type="entry name" value="GLUTAMYL-Q TRNA(ASP) SYNTHETASE"/>
    <property type="match status" value="1"/>
</dbReference>
<dbReference type="Pfam" id="PF00749">
    <property type="entry name" value="tRNA-synt_1c"/>
    <property type="match status" value="2"/>
</dbReference>
<dbReference type="PRINTS" id="PR00987">
    <property type="entry name" value="TRNASYNTHGLU"/>
</dbReference>
<dbReference type="SUPFAM" id="SSF52374">
    <property type="entry name" value="Nucleotidylyl transferase"/>
    <property type="match status" value="1"/>
</dbReference>
<dbReference type="PROSITE" id="PS00178">
    <property type="entry name" value="AA_TRNA_LIGASE_I"/>
    <property type="match status" value="1"/>
</dbReference>
<name>GLUQ_PROMM</name>
<feature type="chain" id="PRO_0000208312" description="Glutamyl-Q tRNA(Asp) synthetase">
    <location>
        <begin position="1"/>
        <end position="306"/>
    </location>
</feature>
<feature type="short sequence motif" description="'HIGH' region">
    <location>
        <begin position="32"/>
        <end position="42"/>
    </location>
</feature>
<feature type="short sequence motif" description="'KMSKS' region">
    <location>
        <begin position="244"/>
        <end position="248"/>
    </location>
</feature>
<feature type="binding site" evidence="1">
    <location>
        <begin position="29"/>
        <end position="33"/>
    </location>
    <ligand>
        <name>L-glutamate</name>
        <dbReference type="ChEBI" id="CHEBI:29985"/>
    </ligand>
</feature>
<feature type="binding site" evidence="1">
    <location>
        <position position="65"/>
    </location>
    <ligand>
        <name>L-glutamate</name>
        <dbReference type="ChEBI" id="CHEBI:29985"/>
    </ligand>
</feature>
<feature type="binding site" evidence="1">
    <location>
        <position position="121"/>
    </location>
    <ligand>
        <name>Zn(2+)</name>
        <dbReference type="ChEBI" id="CHEBI:29105"/>
    </ligand>
</feature>
<feature type="binding site" evidence="1">
    <location>
        <position position="123"/>
    </location>
    <ligand>
        <name>Zn(2+)</name>
        <dbReference type="ChEBI" id="CHEBI:29105"/>
    </ligand>
</feature>
<feature type="binding site" evidence="1">
    <location>
        <position position="141"/>
    </location>
    <ligand>
        <name>Zn(2+)</name>
        <dbReference type="ChEBI" id="CHEBI:29105"/>
    </ligand>
</feature>
<feature type="binding site" evidence="1">
    <location>
        <position position="145"/>
    </location>
    <ligand>
        <name>Zn(2+)</name>
        <dbReference type="ChEBI" id="CHEBI:29105"/>
    </ligand>
</feature>
<feature type="binding site" evidence="1">
    <location>
        <position position="188"/>
    </location>
    <ligand>
        <name>L-glutamate</name>
        <dbReference type="ChEBI" id="CHEBI:29985"/>
    </ligand>
</feature>
<feature type="binding site" evidence="1">
    <location>
        <position position="206"/>
    </location>
    <ligand>
        <name>L-glutamate</name>
        <dbReference type="ChEBI" id="CHEBI:29985"/>
    </ligand>
</feature>
<feature type="binding site" evidence="1">
    <location>
        <position position="247"/>
    </location>
    <ligand>
        <name>ATP</name>
        <dbReference type="ChEBI" id="CHEBI:30616"/>
    </ligand>
</feature>
<sequence length="306" mass="34097">MAKSSALPDHLYEQMEVGQRLRNQGYRGRFAPSPTGPLHLGNLCTALVSWLQARLANGAWLLRVDDLDQPRNRVGAVESLQQDLHWLGLEWDGPVVFQSRRRGIYNSFLSALRRQGKLYACRCSRRMLADISAPAGRHLVYPGTCRDLELFWGWHEGRLPSWRLRVSKEFSHTSGDVILRRADGFIAYHLATVVDELTLGISEVVRGEDLLDAMNAQLALINAISERPVIYRHVPLLCDDQGRKLAKREGHAGLDSLRSEGLGPSHVVGWLAASQSLVPFGAELTAGELLSELKKKEGVLKSVLKP</sequence>
<keyword id="KW-0030">Aminoacyl-tRNA synthetase</keyword>
<keyword id="KW-0067">ATP-binding</keyword>
<keyword id="KW-0436">Ligase</keyword>
<keyword id="KW-0479">Metal-binding</keyword>
<keyword id="KW-0547">Nucleotide-binding</keyword>
<keyword id="KW-1185">Reference proteome</keyword>
<keyword id="KW-0862">Zinc</keyword>
<protein>
    <recommendedName>
        <fullName evidence="1">Glutamyl-Q tRNA(Asp) synthetase</fullName>
        <shortName evidence="1">Glu-Q-RSs</shortName>
        <ecNumber evidence="1">6.1.1.-</ecNumber>
    </recommendedName>
</protein>
<evidence type="ECO:0000255" key="1">
    <source>
        <dbReference type="HAMAP-Rule" id="MF_01428"/>
    </source>
</evidence>
<reference key="1">
    <citation type="journal article" date="2003" name="Nature">
        <title>Genome divergence in two Prochlorococcus ecotypes reflects oceanic niche differentiation.</title>
        <authorList>
            <person name="Rocap G."/>
            <person name="Larimer F.W."/>
            <person name="Lamerdin J.E."/>
            <person name="Malfatti S."/>
            <person name="Chain P."/>
            <person name="Ahlgren N.A."/>
            <person name="Arellano A."/>
            <person name="Coleman M."/>
            <person name="Hauser L."/>
            <person name="Hess W.R."/>
            <person name="Johnson Z.I."/>
            <person name="Land M.L."/>
            <person name="Lindell D."/>
            <person name="Post A.F."/>
            <person name="Regala W."/>
            <person name="Shah M."/>
            <person name="Shaw S.L."/>
            <person name="Steglich C."/>
            <person name="Sullivan M.B."/>
            <person name="Ting C.S."/>
            <person name="Tolonen A."/>
            <person name="Webb E.A."/>
            <person name="Zinser E.R."/>
            <person name="Chisholm S.W."/>
        </authorList>
    </citation>
    <scope>NUCLEOTIDE SEQUENCE [LARGE SCALE GENOMIC DNA]</scope>
    <source>
        <strain>MIT 9313</strain>
    </source>
</reference>
<proteinExistence type="inferred from homology"/>
<accession>Q7TUT1</accession>